<organism>
    <name type="scientific">Coxiella burnetii (strain RSA 493 / Nine Mile phase I)</name>
    <dbReference type="NCBI Taxonomy" id="227377"/>
    <lineage>
        <taxon>Bacteria</taxon>
        <taxon>Pseudomonadati</taxon>
        <taxon>Pseudomonadota</taxon>
        <taxon>Gammaproteobacteria</taxon>
        <taxon>Legionellales</taxon>
        <taxon>Coxiellaceae</taxon>
        <taxon>Coxiella</taxon>
    </lineage>
</organism>
<sequence length="434" mass="46762">MDKLIIVGGVPLNGSIRISGAKNAVLPILAATLLIEEPVILSNIPHLNDVTTMIELLGRMGAQITIDERMSIEVDCSQIQNVHASYELVKTMRASILVLGPLLSRFGKAEVSLPGGCAIGSRPVDVHIDGMRALGADIELVDGFIHATVEGRLKGAELNLGKITVTGTENLIMAATLAEGQTIIHNAACEPEVQDLANFLNKMGARISGAGTDTIVIDGVDRLSGGSYSILPDRIEAGTYLVAAAMTRGHVRIRDVFPKTLGAVLEKLHEAGARVKIGENWVDLDMQGRRAKAVDIVTAPYPEMPTDMQAQFMALNVVAEGQAVITETVFENRFMHVHELQRMGADIKLQGSKALIRGKEKLTGAPVMATDLRASAGLVLAGLMARGNTIVDRIYHIDRGYECIEEKLAQLGAEIRRVSSHVYAARYAAQKRWL</sequence>
<reference key="1">
    <citation type="journal article" date="2003" name="Proc. Natl. Acad. Sci. U.S.A.">
        <title>Complete genome sequence of the Q-fever pathogen, Coxiella burnetii.</title>
        <authorList>
            <person name="Seshadri R."/>
            <person name="Paulsen I.T."/>
            <person name="Eisen J.A."/>
            <person name="Read T.D."/>
            <person name="Nelson K.E."/>
            <person name="Nelson W.C."/>
            <person name="Ward N.L."/>
            <person name="Tettelin H."/>
            <person name="Davidsen T.M."/>
            <person name="Beanan M.J."/>
            <person name="DeBoy R.T."/>
            <person name="Daugherty S.C."/>
            <person name="Brinkac L.M."/>
            <person name="Madupu R."/>
            <person name="Dodson R.J."/>
            <person name="Khouri H.M."/>
            <person name="Lee K.H."/>
            <person name="Carty H.A."/>
            <person name="Scanlan D."/>
            <person name="Heinzen R.A."/>
            <person name="Thompson H.A."/>
            <person name="Samuel J.E."/>
            <person name="Fraser C.M."/>
            <person name="Heidelberg J.F."/>
        </authorList>
    </citation>
    <scope>NUCLEOTIDE SEQUENCE [LARGE SCALE GENOMIC DNA]</scope>
    <source>
        <strain>RSA 493 / Nine Mile phase I</strain>
    </source>
</reference>
<comment type="function">
    <text evidence="1">Cell wall formation. Adds enolpyruvyl to UDP-N-acetylglucosamine.</text>
</comment>
<comment type="catalytic activity">
    <reaction evidence="1">
        <text>phosphoenolpyruvate + UDP-N-acetyl-alpha-D-glucosamine = UDP-N-acetyl-3-O-(1-carboxyvinyl)-alpha-D-glucosamine + phosphate</text>
        <dbReference type="Rhea" id="RHEA:18681"/>
        <dbReference type="ChEBI" id="CHEBI:43474"/>
        <dbReference type="ChEBI" id="CHEBI:57705"/>
        <dbReference type="ChEBI" id="CHEBI:58702"/>
        <dbReference type="ChEBI" id="CHEBI:68483"/>
        <dbReference type="EC" id="2.5.1.7"/>
    </reaction>
</comment>
<comment type="pathway">
    <text evidence="1">Cell wall biogenesis; peptidoglycan biosynthesis.</text>
</comment>
<comment type="subcellular location">
    <subcellularLocation>
        <location evidence="1">Cytoplasm</location>
    </subcellularLocation>
</comment>
<comment type="similarity">
    <text evidence="1">Belongs to the EPSP synthase family. MurA subfamily.</text>
</comment>
<accession>Q83DI0</accession>
<evidence type="ECO:0000255" key="1">
    <source>
        <dbReference type="HAMAP-Rule" id="MF_00111"/>
    </source>
</evidence>
<feature type="chain" id="PRO_0000231197" description="UDP-N-acetylglucosamine 1-carboxyvinyltransferase">
    <location>
        <begin position="1"/>
        <end position="434"/>
    </location>
</feature>
<feature type="active site" description="Proton donor" evidence="1">
    <location>
        <position position="117"/>
    </location>
</feature>
<feature type="binding site" evidence="1">
    <location>
        <begin position="22"/>
        <end position="23"/>
    </location>
    <ligand>
        <name>phosphoenolpyruvate</name>
        <dbReference type="ChEBI" id="CHEBI:58702"/>
    </ligand>
</feature>
<feature type="binding site" evidence="1">
    <location>
        <position position="93"/>
    </location>
    <ligand>
        <name>UDP-N-acetyl-alpha-D-glucosamine</name>
        <dbReference type="ChEBI" id="CHEBI:57705"/>
    </ligand>
</feature>
<feature type="binding site" evidence="1">
    <location>
        <position position="307"/>
    </location>
    <ligand>
        <name>UDP-N-acetyl-alpha-D-glucosamine</name>
        <dbReference type="ChEBI" id="CHEBI:57705"/>
    </ligand>
</feature>
<feature type="binding site" evidence="1">
    <location>
        <position position="329"/>
    </location>
    <ligand>
        <name>UDP-N-acetyl-alpha-D-glucosamine</name>
        <dbReference type="ChEBI" id="CHEBI:57705"/>
    </ligand>
</feature>
<feature type="modified residue" description="2-(S-cysteinyl)pyruvic acid O-phosphothioketal" evidence="1">
    <location>
        <position position="117"/>
    </location>
</feature>
<dbReference type="EC" id="2.5.1.7" evidence="1"/>
<dbReference type="EMBL" id="AE016828">
    <property type="protein sequence ID" value="AAO90291.1"/>
    <property type="molecule type" value="Genomic_DNA"/>
</dbReference>
<dbReference type="RefSeq" id="NP_819777.1">
    <property type="nucleotide sequence ID" value="NC_002971.4"/>
</dbReference>
<dbReference type="RefSeq" id="WP_005771755.1">
    <property type="nucleotide sequence ID" value="NZ_CDBG01000001.1"/>
</dbReference>
<dbReference type="SMR" id="Q83DI0"/>
<dbReference type="STRING" id="227377.CBU_0751"/>
<dbReference type="EnsemblBacteria" id="AAO90291">
    <property type="protein sequence ID" value="AAO90291"/>
    <property type="gene ID" value="CBU_0751"/>
</dbReference>
<dbReference type="GeneID" id="1208642"/>
<dbReference type="KEGG" id="cbu:CBU_0751"/>
<dbReference type="PATRIC" id="fig|227377.7.peg.735"/>
<dbReference type="eggNOG" id="COG0766">
    <property type="taxonomic scope" value="Bacteria"/>
</dbReference>
<dbReference type="HOGENOM" id="CLU_027387_0_0_6"/>
<dbReference type="OrthoDB" id="9803760at2"/>
<dbReference type="UniPathway" id="UPA00219"/>
<dbReference type="Proteomes" id="UP000002671">
    <property type="component" value="Chromosome"/>
</dbReference>
<dbReference type="GO" id="GO:0005737">
    <property type="term" value="C:cytoplasm"/>
    <property type="evidence" value="ECO:0007669"/>
    <property type="project" value="UniProtKB-SubCell"/>
</dbReference>
<dbReference type="GO" id="GO:0008760">
    <property type="term" value="F:UDP-N-acetylglucosamine 1-carboxyvinyltransferase activity"/>
    <property type="evidence" value="ECO:0000318"/>
    <property type="project" value="GO_Central"/>
</dbReference>
<dbReference type="GO" id="GO:0051301">
    <property type="term" value="P:cell division"/>
    <property type="evidence" value="ECO:0007669"/>
    <property type="project" value="UniProtKB-KW"/>
</dbReference>
<dbReference type="GO" id="GO:0071555">
    <property type="term" value="P:cell wall organization"/>
    <property type="evidence" value="ECO:0007669"/>
    <property type="project" value="UniProtKB-KW"/>
</dbReference>
<dbReference type="GO" id="GO:0009252">
    <property type="term" value="P:peptidoglycan biosynthetic process"/>
    <property type="evidence" value="ECO:0000318"/>
    <property type="project" value="GO_Central"/>
</dbReference>
<dbReference type="GO" id="GO:0008360">
    <property type="term" value="P:regulation of cell shape"/>
    <property type="evidence" value="ECO:0007669"/>
    <property type="project" value="UniProtKB-KW"/>
</dbReference>
<dbReference type="GO" id="GO:0019277">
    <property type="term" value="P:UDP-N-acetylgalactosamine biosynthetic process"/>
    <property type="evidence" value="ECO:0007669"/>
    <property type="project" value="InterPro"/>
</dbReference>
<dbReference type="CDD" id="cd01555">
    <property type="entry name" value="UdpNAET"/>
    <property type="match status" value="1"/>
</dbReference>
<dbReference type="FunFam" id="3.65.10.10:FF:000001">
    <property type="entry name" value="UDP-N-acetylglucosamine 1-carboxyvinyltransferase"/>
    <property type="match status" value="1"/>
</dbReference>
<dbReference type="FunFam" id="3.65.10.10:FF:000002">
    <property type="entry name" value="UDP-N-acetylglucosamine 1-carboxyvinyltransferase"/>
    <property type="match status" value="1"/>
</dbReference>
<dbReference type="Gene3D" id="3.65.10.10">
    <property type="entry name" value="Enolpyruvate transferase domain"/>
    <property type="match status" value="2"/>
</dbReference>
<dbReference type="HAMAP" id="MF_00111">
    <property type="entry name" value="MurA"/>
    <property type="match status" value="1"/>
</dbReference>
<dbReference type="InterPro" id="IPR001986">
    <property type="entry name" value="Enolpyruvate_Tfrase_dom"/>
</dbReference>
<dbReference type="InterPro" id="IPR036968">
    <property type="entry name" value="Enolpyruvate_Tfrase_sf"/>
</dbReference>
<dbReference type="InterPro" id="IPR050068">
    <property type="entry name" value="MurA_subfamily"/>
</dbReference>
<dbReference type="InterPro" id="IPR013792">
    <property type="entry name" value="RNA3'P_cycl/enolpyr_Trfase_a/b"/>
</dbReference>
<dbReference type="InterPro" id="IPR005750">
    <property type="entry name" value="UDP_GlcNAc_COvinyl_MurA"/>
</dbReference>
<dbReference type="NCBIfam" id="TIGR01072">
    <property type="entry name" value="murA"/>
    <property type="match status" value="1"/>
</dbReference>
<dbReference type="NCBIfam" id="NF006873">
    <property type="entry name" value="PRK09369.1"/>
    <property type="match status" value="1"/>
</dbReference>
<dbReference type="PANTHER" id="PTHR43783">
    <property type="entry name" value="UDP-N-ACETYLGLUCOSAMINE 1-CARBOXYVINYLTRANSFERASE"/>
    <property type="match status" value="1"/>
</dbReference>
<dbReference type="PANTHER" id="PTHR43783:SF1">
    <property type="entry name" value="UDP-N-ACETYLGLUCOSAMINE 1-CARBOXYVINYLTRANSFERASE"/>
    <property type="match status" value="1"/>
</dbReference>
<dbReference type="Pfam" id="PF00275">
    <property type="entry name" value="EPSP_synthase"/>
    <property type="match status" value="1"/>
</dbReference>
<dbReference type="SUPFAM" id="SSF55205">
    <property type="entry name" value="EPT/RTPC-like"/>
    <property type="match status" value="1"/>
</dbReference>
<protein>
    <recommendedName>
        <fullName evidence="1">UDP-N-acetylglucosamine 1-carboxyvinyltransferase</fullName>
        <ecNumber evidence="1">2.5.1.7</ecNumber>
    </recommendedName>
    <alternativeName>
        <fullName evidence="1">Enoylpyruvate transferase</fullName>
    </alternativeName>
    <alternativeName>
        <fullName evidence="1">UDP-N-acetylglucosamine enolpyruvyl transferase</fullName>
        <shortName evidence="1">EPT</shortName>
    </alternativeName>
</protein>
<keyword id="KW-0131">Cell cycle</keyword>
<keyword id="KW-0132">Cell division</keyword>
<keyword id="KW-0133">Cell shape</keyword>
<keyword id="KW-0961">Cell wall biogenesis/degradation</keyword>
<keyword id="KW-0963">Cytoplasm</keyword>
<keyword id="KW-0573">Peptidoglycan synthesis</keyword>
<keyword id="KW-0670">Pyruvate</keyword>
<keyword id="KW-1185">Reference proteome</keyword>
<keyword id="KW-0808">Transferase</keyword>
<proteinExistence type="inferred from homology"/>
<gene>
    <name evidence="1" type="primary">murA</name>
    <name type="ordered locus">CBU_0751</name>
</gene>
<name>MURA_COXBU</name>